<sequence length="1102" mass="117431">MPKRSDIQSVLVIGSGPIVIGQAAEFDYSGTQACRVLKAEGLRVILVNSNPATIMTDPEIADATYVEPITPEFVEKIIAKERPDALLPTLGGQTALNTAISMHDNGVLEKYGVELIGANVEAINKGEDRDLFKGVVEAVKEKIGYGESARSVICHSMDDVIAGVDTLGGYPVVVRPSFTMGGAGSGFAHDEEELRRIAGQGLTLSPTTEVLLEESILGWKEYELELMRDRNDNVVVVCSIENFDPMGVHTGDSITVAPAMTLTDREYQRLRDVGIAIIREVGVDTGGCNIQFAIDPTDGRVIVIEMNPRVSRSSALASKATGFPIAKIAAKLAVGYTLDEIPNDITEKTPASFEPTLDYVVVKAPRFAFEKFPSADSSLTTTMKSVGEAMAIGRNFTEALQKALRSLEKKGSQFAFTGPVGDKAELLAEAVRPTDGRINTVMQAIRAGATQEEVFDATKIDPWFVDQLFLIKEIADELASAERLDAGLIAEAKRHGFSDAQIGGIRGLREDVVREVRHALGIRPVYKTVDTCAAEFAAKTPYFYSSYDEESEVAPRTKPAVIILGSGPNRIGQGIEFDYSCVHASFALSDAGYETVMVNCNPETVSTDYDTSDRLYFEPLTLEDVLEIVHAESLAGPIAGVIVQLGGQTPLGLSQALKDNGVPVVGTSPEAIHAAEDRGAFGRVLAEAGLPAPKHGTATTFAEAKAIADEIGYPVLVRPSYVLGGRGMEIVYDETRLASYISESTEISPTRPVLVDRFLDDAIEIDVDALYDGTELYLGGVMEHIEEAGIHSGDSACALPPITLGGFDIKRLRASTEGIAKGVGVLGLINIQFALSGDILYVLEANPRASRTVPFTSKATAVPLAKAAARISLGATIAELRAEGLLPRTGDGGTLPLDAPISVKEAVMPWSRFRDIHGRGVDTVLGPEMRSTGEVMGIDSVFGTAYAKSQAGAYGPLPTAGRAFISVANRDKRSMIFPARELVAHGFELMATSGTAEVLKRNGINATVVRKQSEGTGPNGEKTIVQHIHDGEVDLIVNTPYGTGGRLDGYEIRTAAVARSVPCLTTVQALAAAVQGIDALNHGGVGVRSLQEHAEHLTAARD</sequence>
<keyword id="KW-0028">Amino-acid biosynthesis</keyword>
<keyword id="KW-0055">Arginine biosynthesis</keyword>
<keyword id="KW-0067">ATP-binding</keyword>
<keyword id="KW-0436">Ligase</keyword>
<keyword id="KW-0460">Magnesium</keyword>
<keyword id="KW-0464">Manganese</keyword>
<keyword id="KW-0479">Metal-binding</keyword>
<keyword id="KW-0547">Nucleotide-binding</keyword>
<keyword id="KW-0665">Pyrimidine biosynthesis</keyword>
<keyword id="KW-0677">Repeat</keyword>
<reference key="1">
    <citation type="journal article" date="2008" name="J. Bacteriol.">
        <title>Genome sequence of the streptomycin-producing microorganism Streptomyces griseus IFO 13350.</title>
        <authorList>
            <person name="Ohnishi Y."/>
            <person name="Ishikawa J."/>
            <person name="Hara H."/>
            <person name="Suzuki H."/>
            <person name="Ikenoya M."/>
            <person name="Ikeda H."/>
            <person name="Yamashita A."/>
            <person name="Hattori M."/>
            <person name="Horinouchi S."/>
        </authorList>
    </citation>
    <scope>NUCLEOTIDE SEQUENCE [LARGE SCALE GENOMIC DNA]</scope>
    <source>
        <strain>JCM 4626 / CBS 651.72 / NBRC 13350 / KCC S-0626 / ISP 5235</strain>
    </source>
</reference>
<dbReference type="EC" id="6.3.4.16" evidence="1"/>
<dbReference type="EC" id="6.3.5.5" evidence="1"/>
<dbReference type="EMBL" id="AP009493">
    <property type="protein sequence ID" value="BAG22880.1"/>
    <property type="molecule type" value="Genomic_DNA"/>
</dbReference>
<dbReference type="RefSeq" id="WP_003970364.1">
    <property type="nucleotide sequence ID" value="NC_010572.1"/>
</dbReference>
<dbReference type="SMR" id="B1W463"/>
<dbReference type="KEGG" id="sgr:SGR_6051"/>
<dbReference type="eggNOG" id="COG0458">
    <property type="taxonomic scope" value="Bacteria"/>
</dbReference>
<dbReference type="HOGENOM" id="CLU_000513_1_0_11"/>
<dbReference type="UniPathway" id="UPA00068">
    <property type="reaction ID" value="UER00171"/>
</dbReference>
<dbReference type="UniPathway" id="UPA00070">
    <property type="reaction ID" value="UER00115"/>
</dbReference>
<dbReference type="Proteomes" id="UP000001685">
    <property type="component" value="Chromosome"/>
</dbReference>
<dbReference type="GO" id="GO:0005737">
    <property type="term" value="C:cytoplasm"/>
    <property type="evidence" value="ECO:0007669"/>
    <property type="project" value="TreeGrafter"/>
</dbReference>
<dbReference type="GO" id="GO:0005524">
    <property type="term" value="F:ATP binding"/>
    <property type="evidence" value="ECO:0007669"/>
    <property type="project" value="UniProtKB-UniRule"/>
</dbReference>
<dbReference type="GO" id="GO:0004087">
    <property type="term" value="F:carbamoyl-phosphate synthase (ammonia) activity"/>
    <property type="evidence" value="ECO:0007669"/>
    <property type="project" value="RHEA"/>
</dbReference>
<dbReference type="GO" id="GO:0004088">
    <property type="term" value="F:carbamoyl-phosphate synthase (glutamine-hydrolyzing) activity"/>
    <property type="evidence" value="ECO:0007669"/>
    <property type="project" value="UniProtKB-UniRule"/>
</dbReference>
<dbReference type="GO" id="GO:0046872">
    <property type="term" value="F:metal ion binding"/>
    <property type="evidence" value="ECO:0007669"/>
    <property type="project" value="UniProtKB-KW"/>
</dbReference>
<dbReference type="GO" id="GO:0044205">
    <property type="term" value="P:'de novo' UMP biosynthetic process"/>
    <property type="evidence" value="ECO:0007669"/>
    <property type="project" value="UniProtKB-UniRule"/>
</dbReference>
<dbReference type="GO" id="GO:0006541">
    <property type="term" value="P:glutamine metabolic process"/>
    <property type="evidence" value="ECO:0007669"/>
    <property type="project" value="TreeGrafter"/>
</dbReference>
<dbReference type="GO" id="GO:0006526">
    <property type="term" value="P:L-arginine biosynthetic process"/>
    <property type="evidence" value="ECO:0007669"/>
    <property type="project" value="UniProtKB-UniRule"/>
</dbReference>
<dbReference type="CDD" id="cd01424">
    <property type="entry name" value="MGS_CPS_II"/>
    <property type="match status" value="1"/>
</dbReference>
<dbReference type="FunFam" id="1.10.1030.10:FF:000002">
    <property type="entry name" value="Carbamoyl-phosphate synthase large chain"/>
    <property type="match status" value="1"/>
</dbReference>
<dbReference type="FunFam" id="3.30.1490.20:FF:000001">
    <property type="entry name" value="Carbamoyl-phosphate synthase large chain"/>
    <property type="match status" value="1"/>
</dbReference>
<dbReference type="FunFam" id="3.30.470.20:FF:000007">
    <property type="entry name" value="Carbamoyl-phosphate synthase large chain"/>
    <property type="match status" value="1"/>
</dbReference>
<dbReference type="FunFam" id="3.30.470.20:FF:000014">
    <property type="entry name" value="Carbamoyl-phosphate synthase large chain"/>
    <property type="match status" value="1"/>
</dbReference>
<dbReference type="FunFam" id="3.40.50.1380:FF:000007">
    <property type="entry name" value="Carbamoyl-phosphate synthase large chain"/>
    <property type="match status" value="1"/>
</dbReference>
<dbReference type="FunFam" id="3.40.50.20:FF:000001">
    <property type="entry name" value="Carbamoyl-phosphate synthase large chain"/>
    <property type="match status" value="1"/>
</dbReference>
<dbReference type="FunFam" id="3.40.50.20:FF:000003">
    <property type="entry name" value="Carbamoyl-phosphate synthase large chain"/>
    <property type="match status" value="1"/>
</dbReference>
<dbReference type="Gene3D" id="3.40.50.20">
    <property type="match status" value="2"/>
</dbReference>
<dbReference type="Gene3D" id="3.30.1490.20">
    <property type="entry name" value="ATP-grasp fold, A domain"/>
    <property type="match status" value="1"/>
</dbReference>
<dbReference type="Gene3D" id="3.30.470.20">
    <property type="entry name" value="ATP-grasp fold, B domain"/>
    <property type="match status" value="2"/>
</dbReference>
<dbReference type="Gene3D" id="1.10.1030.10">
    <property type="entry name" value="Carbamoyl-phosphate synthetase, large subunit oligomerisation domain"/>
    <property type="match status" value="1"/>
</dbReference>
<dbReference type="Gene3D" id="3.40.50.1380">
    <property type="entry name" value="Methylglyoxal synthase-like domain"/>
    <property type="match status" value="1"/>
</dbReference>
<dbReference type="HAMAP" id="MF_01210_B">
    <property type="entry name" value="CPSase_L_chain_B"/>
    <property type="match status" value="1"/>
</dbReference>
<dbReference type="InterPro" id="IPR011761">
    <property type="entry name" value="ATP-grasp"/>
</dbReference>
<dbReference type="InterPro" id="IPR013815">
    <property type="entry name" value="ATP_grasp_subdomain_1"/>
</dbReference>
<dbReference type="InterPro" id="IPR006275">
    <property type="entry name" value="CarbamoylP_synth_lsu"/>
</dbReference>
<dbReference type="InterPro" id="IPR005480">
    <property type="entry name" value="CarbamoylP_synth_lsu_oligo"/>
</dbReference>
<dbReference type="InterPro" id="IPR036897">
    <property type="entry name" value="CarbamoylP_synth_lsu_oligo_sf"/>
</dbReference>
<dbReference type="InterPro" id="IPR005479">
    <property type="entry name" value="CbamoylP_synth_lsu-like_ATP-bd"/>
</dbReference>
<dbReference type="InterPro" id="IPR005483">
    <property type="entry name" value="CbamoylP_synth_lsu_CPSase_dom"/>
</dbReference>
<dbReference type="InterPro" id="IPR011607">
    <property type="entry name" value="MGS-like_dom"/>
</dbReference>
<dbReference type="InterPro" id="IPR036914">
    <property type="entry name" value="MGS-like_dom_sf"/>
</dbReference>
<dbReference type="InterPro" id="IPR033937">
    <property type="entry name" value="MGS_CPS_CarB"/>
</dbReference>
<dbReference type="InterPro" id="IPR016185">
    <property type="entry name" value="PreATP-grasp_dom_sf"/>
</dbReference>
<dbReference type="NCBIfam" id="TIGR01369">
    <property type="entry name" value="CPSaseII_lrg"/>
    <property type="match status" value="1"/>
</dbReference>
<dbReference type="NCBIfam" id="NF003671">
    <property type="entry name" value="PRK05294.1"/>
    <property type="match status" value="1"/>
</dbReference>
<dbReference type="NCBIfam" id="NF009455">
    <property type="entry name" value="PRK12815.1"/>
    <property type="match status" value="1"/>
</dbReference>
<dbReference type="PANTHER" id="PTHR11405:SF53">
    <property type="entry name" value="CARBAMOYL-PHOSPHATE SYNTHASE [AMMONIA], MITOCHONDRIAL"/>
    <property type="match status" value="1"/>
</dbReference>
<dbReference type="PANTHER" id="PTHR11405">
    <property type="entry name" value="CARBAMOYLTRANSFERASE FAMILY MEMBER"/>
    <property type="match status" value="1"/>
</dbReference>
<dbReference type="Pfam" id="PF02786">
    <property type="entry name" value="CPSase_L_D2"/>
    <property type="match status" value="2"/>
</dbReference>
<dbReference type="Pfam" id="PF02787">
    <property type="entry name" value="CPSase_L_D3"/>
    <property type="match status" value="1"/>
</dbReference>
<dbReference type="Pfam" id="PF02142">
    <property type="entry name" value="MGS"/>
    <property type="match status" value="1"/>
</dbReference>
<dbReference type="PRINTS" id="PR00098">
    <property type="entry name" value="CPSASE"/>
</dbReference>
<dbReference type="SMART" id="SM01096">
    <property type="entry name" value="CPSase_L_D3"/>
    <property type="match status" value="1"/>
</dbReference>
<dbReference type="SMART" id="SM00851">
    <property type="entry name" value="MGS"/>
    <property type="match status" value="1"/>
</dbReference>
<dbReference type="SUPFAM" id="SSF48108">
    <property type="entry name" value="Carbamoyl phosphate synthetase, large subunit connection domain"/>
    <property type="match status" value="1"/>
</dbReference>
<dbReference type="SUPFAM" id="SSF56059">
    <property type="entry name" value="Glutathione synthetase ATP-binding domain-like"/>
    <property type="match status" value="2"/>
</dbReference>
<dbReference type="SUPFAM" id="SSF52335">
    <property type="entry name" value="Methylglyoxal synthase-like"/>
    <property type="match status" value="1"/>
</dbReference>
<dbReference type="SUPFAM" id="SSF52440">
    <property type="entry name" value="PreATP-grasp domain"/>
    <property type="match status" value="2"/>
</dbReference>
<dbReference type="PROSITE" id="PS50975">
    <property type="entry name" value="ATP_GRASP"/>
    <property type="match status" value="2"/>
</dbReference>
<dbReference type="PROSITE" id="PS00866">
    <property type="entry name" value="CPSASE_1"/>
    <property type="match status" value="2"/>
</dbReference>
<dbReference type="PROSITE" id="PS00867">
    <property type="entry name" value="CPSASE_2"/>
    <property type="match status" value="2"/>
</dbReference>
<dbReference type="PROSITE" id="PS51855">
    <property type="entry name" value="MGS"/>
    <property type="match status" value="1"/>
</dbReference>
<organism>
    <name type="scientific">Streptomyces griseus subsp. griseus (strain JCM 4626 / CBS 651.72 / NBRC 13350 / KCC S-0626 / ISP 5235)</name>
    <dbReference type="NCBI Taxonomy" id="455632"/>
    <lineage>
        <taxon>Bacteria</taxon>
        <taxon>Bacillati</taxon>
        <taxon>Actinomycetota</taxon>
        <taxon>Actinomycetes</taxon>
        <taxon>Kitasatosporales</taxon>
        <taxon>Streptomycetaceae</taxon>
        <taxon>Streptomyces</taxon>
    </lineage>
</organism>
<proteinExistence type="inferred from homology"/>
<accession>B1W463</accession>
<evidence type="ECO:0000255" key="1">
    <source>
        <dbReference type="HAMAP-Rule" id="MF_01210"/>
    </source>
</evidence>
<protein>
    <recommendedName>
        <fullName evidence="1">Carbamoyl phosphate synthase large chain</fullName>
        <ecNumber evidence="1">6.3.4.16</ecNumber>
        <ecNumber evidence="1">6.3.5.5</ecNumber>
    </recommendedName>
    <alternativeName>
        <fullName evidence="1">Carbamoyl phosphate synthetase ammonia chain</fullName>
    </alternativeName>
</protein>
<name>CARB_STRGG</name>
<comment type="function">
    <text evidence="1">Large subunit of the glutamine-dependent carbamoyl phosphate synthetase (CPSase). CPSase catalyzes the formation of carbamoyl phosphate from the ammonia moiety of glutamine, carbonate, and phosphate donated by ATP, constituting the first step of 2 biosynthetic pathways, one leading to arginine and/or urea and the other to pyrimidine nucleotides. The large subunit (synthetase) binds the substrates ammonia (free or transferred from glutamine from the small subunit), hydrogencarbonate and ATP and carries out an ATP-coupled ligase reaction, activating hydrogencarbonate by forming carboxy phosphate which reacts with ammonia to form carbamoyl phosphate.</text>
</comment>
<comment type="catalytic activity">
    <reaction evidence="1">
        <text>hydrogencarbonate + L-glutamine + 2 ATP + H2O = carbamoyl phosphate + L-glutamate + 2 ADP + phosphate + 2 H(+)</text>
        <dbReference type="Rhea" id="RHEA:18633"/>
        <dbReference type="ChEBI" id="CHEBI:15377"/>
        <dbReference type="ChEBI" id="CHEBI:15378"/>
        <dbReference type="ChEBI" id="CHEBI:17544"/>
        <dbReference type="ChEBI" id="CHEBI:29985"/>
        <dbReference type="ChEBI" id="CHEBI:30616"/>
        <dbReference type="ChEBI" id="CHEBI:43474"/>
        <dbReference type="ChEBI" id="CHEBI:58228"/>
        <dbReference type="ChEBI" id="CHEBI:58359"/>
        <dbReference type="ChEBI" id="CHEBI:456216"/>
        <dbReference type="EC" id="6.3.5.5"/>
    </reaction>
</comment>
<comment type="catalytic activity">
    <molecule>Carbamoyl phosphate synthase large chain</molecule>
    <reaction evidence="1">
        <text>hydrogencarbonate + NH4(+) + 2 ATP = carbamoyl phosphate + 2 ADP + phosphate + 2 H(+)</text>
        <dbReference type="Rhea" id="RHEA:18029"/>
        <dbReference type="ChEBI" id="CHEBI:15378"/>
        <dbReference type="ChEBI" id="CHEBI:17544"/>
        <dbReference type="ChEBI" id="CHEBI:28938"/>
        <dbReference type="ChEBI" id="CHEBI:30616"/>
        <dbReference type="ChEBI" id="CHEBI:43474"/>
        <dbReference type="ChEBI" id="CHEBI:58228"/>
        <dbReference type="ChEBI" id="CHEBI:456216"/>
        <dbReference type="EC" id="6.3.4.16"/>
    </reaction>
</comment>
<comment type="cofactor">
    <cofactor evidence="1">
        <name>Mg(2+)</name>
        <dbReference type="ChEBI" id="CHEBI:18420"/>
    </cofactor>
    <cofactor evidence="1">
        <name>Mn(2+)</name>
        <dbReference type="ChEBI" id="CHEBI:29035"/>
    </cofactor>
    <text evidence="1">Binds 4 Mg(2+) or Mn(2+) ions per subunit.</text>
</comment>
<comment type="pathway">
    <text evidence="1">Amino-acid biosynthesis; L-arginine biosynthesis; carbamoyl phosphate from bicarbonate: step 1/1.</text>
</comment>
<comment type="pathway">
    <text evidence="1">Pyrimidine metabolism; UMP biosynthesis via de novo pathway; (S)-dihydroorotate from bicarbonate: step 1/3.</text>
</comment>
<comment type="subunit">
    <text evidence="1">Composed of two chains; the small (or glutamine) chain promotes the hydrolysis of glutamine to ammonia, which is used by the large (or ammonia) chain to synthesize carbamoyl phosphate. Tetramer of heterodimers (alpha,beta)4.</text>
</comment>
<comment type="domain">
    <text evidence="1">The large subunit is composed of 2 ATP-grasp domains that are involved in binding the 2 ATP molecules needed for carbamoyl phosphate synthesis. The N-terminal ATP-grasp domain (referred to as the carboxyphosphate synthetic component) catalyzes the ATP-dependent phosphorylation of hydrogencarbonate to carboxyphosphate and the subsequent nucleophilic attack by ammonia to form a carbamate intermediate. The C-terminal ATP-grasp domain (referred to as the carbamoyl phosphate synthetic component) then catalyzes the phosphorylation of carbamate with the second ATP to form the end product carbamoyl phosphate. The reactive and unstable enzyme intermediates are sequentially channeled from one active site to the next through the interior of the protein over a distance of at least 96 A.</text>
</comment>
<comment type="similarity">
    <text evidence="1">Belongs to the CarB family.</text>
</comment>
<feature type="chain" id="PRO_1000138898" description="Carbamoyl phosphate synthase large chain">
    <location>
        <begin position="1"/>
        <end position="1102"/>
    </location>
</feature>
<feature type="domain" description="ATP-grasp 1" evidence="1">
    <location>
        <begin position="137"/>
        <end position="334"/>
    </location>
</feature>
<feature type="domain" description="ATP-grasp 2" evidence="1">
    <location>
        <begin position="682"/>
        <end position="873"/>
    </location>
</feature>
<feature type="domain" description="MGS-like" evidence="1">
    <location>
        <begin position="955"/>
        <end position="1100"/>
    </location>
</feature>
<feature type="region of interest" description="Carboxyphosphate synthetic domain" evidence="1">
    <location>
        <begin position="1"/>
        <end position="408"/>
    </location>
</feature>
<feature type="region of interest" description="Oligomerization domain" evidence="1">
    <location>
        <begin position="409"/>
        <end position="551"/>
    </location>
</feature>
<feature type="region of interest" description="Carbamoyl phosphate synthetic domain" evidence="1">
    <location>
        <begin position="552"/>
        <end position="954"/>
    </location>
</feature>
<feature type="region of interest" description="Allosteric domain" evidence="1">
    <location>
        <begin position="955"/>
        <end position="1102"/>
    </location>
</feature>
<feature type="binding site" evidence="1">
    <location>
        <position position="129"/>
    </location>
    <ligand>
        <name>ATP</name>
        <dbReference type="ChEBI" id="CHEBI:30616"/>
        <label>1</label>
    </ligand>
</feature>
<feature type="binding site" evidence="1">
    <location>
        <position position="175"/>
    </location>
    <ligand>
        <name>ATP</name>
        <dbReference type="ChEBI" id="CHEBI:30616"/>
        <label>1</label>
    </ligand>
</feature>
<feature type="binding site" evidence="1">
    <location>
        <position position="181"/>
    </location>
    <ligand>
        <name>ATP</name>
        <dbReference type="ChEBI" id="CHEBI:30616"/>
        <label>1</label>
    </ligand>
</feature>
<feature type="binding site" evidence="1">
    <location>
        <position position="182"/>
    </location>
    <ligand>
        <name>ATP</name>
        <dbReference type="ChEBI" id="CHEBI:30616"/>
        <label>1</label>
    </ligand>
</feature>
<feature type="binding site" evidence="1">
    <location>
        <position position="214"/>
    </location>
    <ligand>
        <name>ATP</name>
        <dbReference type="ChEBI" id="CHEBI:30616"/>
        <label>1</label>
    </ligand>
</feature>
<feature type="binding site" evidence="1">
    <location>
        <position position="216"/>
    </location>
    <ligand>
        <name>ATP</name>
        <dbReference type="ChEBI" id="CHEBI:30616"/>
        <label>1</label>
    </ligand>
</feature>
<feature type="binding site" evidence="1">
    <location>
        <position position="221"/>
    </location>
    <ligand>
        <name>ATP</name>
        <dbReference type="ChEBI" id="CHEBI:30616"/>
        <label>1</label>
    </ligand>
</feature>
<feature type="binding site" evidence="1">
    <location>
        <position position="247"/>
    </location>
    <ligand>
        <name>ATP</name>
        <dbReference type="ChEBI" id="CHEBI:30616"/>
        <label>1</label>
    </ligand>
</feature>
<feature type="binding site" evidence="1">
    <location>
        <position position="248"/>
    </location>
    <ligand>
        <name>ATP</name>
        <dbReference type="ChEBI" id="CHEBI:30616"/>
        <label>1</label>
    </ligand>
</feature>
<feature type="binding site" evidence="1">
    <location>
        <position position="249"/>
    </location>
    <ligand>
        <name>ATP</name>
        <dbReference type="ChEBI" id="CHEBI:30616"/>
        <label>1</label>
    </ligand>
</feature>
<feature type="binding site" evidence="1">
    <location>
        <position position="291"/>
    </location>
    <ligand>
        <name>ATP</name>
        <dbReference type="ChEBI" id="CHEBI:30616"/>
        <label>1</label>
    </ligand>
</feature>
<feature type="binding site" evidence="1">
    <location>
        <position position="291"/>
    </location>
    <ligand>
        <name>Mg(2+)</name>
        <dbReference type="ChEBI" id="CHEBI:18420"/>
        <label>1</label>
    </ligand>
</feature>
<feature type="binding site" evidence="1">
    <location>
        <position position="291"/>
    </location>
    <ligand>
        <name>Mn(2+)</name>
        <dbReference type="ChEBI" id="CHEBI:29035"/>
        <label>1</label>
    </ligand>
</feature>
<feature type="binding site" evidence="1">
    <location>
        <position position="305"/>
    </location>
    <ligand>
        <name>ATP</name>
        <dbReference type="ChEBI" id="CHEBI:30616"/>
        <label>1</label>
    </ligand>
</feature>
<feature type="binding site" evidence="1">
    <location>
        <position position="305"/>
    </location>
    <ligand>
        <name>Mg(2+)</name>
        <dbReference type="ChEBI" id="CHEBI:18420"/>
        <label>1</label>
    </ligand>
</feature>
<feature type="binding site" evidence="1">
    <location>
        <position position="305"/>
    </location>
    <ligand>
        <name>Mg(2+)</name>
        <dbReference type="ChEBI" id="CHEBI:18420"/>
        <label>2</label>
    </ligand>
</feature>
<feature type="binding site" evidence="1">
    <location>
        <position position="305"/>
    </location>
    <ligand>
        <name>Mn(2+)</name>
        <dbReference type="ChEBI" id="CHEBI:29035"/>
        <label>1</label>
    </ligand>
</feature>
<feature type="binding site" evidence="1">
    <location>
        <position position="305"/>
    </location>
    <ligand>
        <name>Mn(2+)</name>
        <dbReference type="ChEBI" id="CHEBI:29035"/>
        <label>2</label>
    </ligand>
</feature>
<feature type="binding site" evidence="1">
    <location>
        <position position="307"/>
    </location>
    <ligand>
        <name>Mg(2+)</name>
        <dbReference type="ChEBI" id="CHEBI:18420"/>
        <label>2</label>
    </ligand>
</feature>
<feature type="binding site" evidence="1">
    <location>
        <position position="307"/>
    </location>
    <ligand>
        <name>Mn(2+)</name>
        <dbReference type="ChEBI" id="CHEBI:29035"/>
        <label>2</label>
    </ligand>
</feature>
<feature type="binding site" evidence="1">
    <location>
        <position position="718"/>
    </location>
    <ligand>
        <name>ATP</name>
        <dbReference type="ChEBI" id="CHEBI:30616"/>
        <label>2</label>
    </ligand>
</feature>
<feature type="binding site" evidence="1">
    <location>
        <position position="757"/>
    </location>
    <ligand>
        <name>ATP</name>
        <dbReference type="ChEBI" id="CHEBI:30616"/>
        <label>2</label>
    </ligand>
</feature>
<feature type="binding site" evidence="1">
    <location>
        <position position="759"/>
    </location>
    <ligand>
        <name>ATP</name>
        <dbReference type="ChEBI" id="CHEBI:30616"/>
        <label>2</label>
    </ligand>
</feature>
<feature type="binding site" evidence="1">
    <location>
        <position position="764"/>
    </location>
    <ligand>
        <name>ATP</name>
        <dbReference type="ChEBI" id="CHEBI:30616"/>
        <label>2</label>
    </ligand>
</feature>
<feature type="binding site" evidence="1">
    <location>
        <position position="789"/>
    </location>
    <ligand>
        <name>ATP</name>
        <dbReference type="ChEBI" id="CHEBI:30616"/>
        <label>2</label>
    </ligand>
</feature>
<feature type="binding site" evidence="1">
    <location>
        <position position="790"/>
    </location>
    <ligand>
        <name>ATP</name>
        <dbReference type="ChEBI" id="CHEBI:30616"/>
        <label>2</label>
    </ligand>
</feature>
<feature type="binding site" evidence="1">
    <location>
        <position position="791"/>
    </location>
    <ligand>
        <name>ATP</name>
        <dbReference type="ChEBI" id="CHEBI:30616"/>
        <label>2</label>
    </ligand>
</feature>
<feature type="binding site" evidence="1">
    <location>
        <position position="792"/>
    </location>
    <ligand>
        <name>ATP</name>
        <dbReference type="ChEBI" id="CHEBI:30616"/>
        <label>2</label>
    </ligand>
</feature>
<feature type="binding site" evidence="1">
    <location>
        <position position="832"/>
    </location>
    <ligand>
        <name>ATP</name>
        <dbReference type="ChEBI" id="CHEBI:30616"/>
        <label>2</label>
    </ligand>
</feature>
<feature type="binding site" evidence="1">
    <location>
        <position position="832"/>
    </location>
    <ligand>
        <name>Mg(2+)</name>
        <dbReference type="ChEBI" id="CHEBI:18420"/>
        <label>3</label>
    </ligand>
</feature>
<feature type="binding site" evidence="1">
    <location>
        <position position="832"/>
    </location>
    <ligand>
        <name>Mn(2+)</name>
        <dbReference type="ChEBI" id="CHEBI:29035"/>
        <label>3</label>
    </ligand>
</feature>
<feature type="binding site" evidence="1">
    <location>
        <position position="844"/>
    </location>
    <ligand>
        <name>ATP</name>
        <dbReference type="ChEBI" id="CHEBI:30616"/>
        <label>2</label>
    </ligand>
</feature>
<feature type="binding site" evidence="1">
    <location>
        <position position="844"/>
    </location>
    <ligand>
        <name>Mg(2+)</name>
        <dbReference type="ChEBI" id="CHEBI:18420"/>
        <label>3</label>
    </ligand>
</feature>
<feature type="binding site" evidence="1">
    <location>
        <position position="844"/>
    </location>
    <ligand>
        <name>Mg(2+)</name>
        <dbReference type="ChEBI" id="CHEBI:18420"/>
        <label>4</label>
    </ligand>
</feature>
<feature type="binding site" evidence="1">
    <location>
        <position position="844"/>
    </location>
    <ligand>
        <name>Mn(2+)</name>
        <dbReference type="ChEBI" id="CHEBI:29035"/>
        <label>3</label>
    </ligand>
</feature>
<feature type="binding site" evidence="1">
    <location>
        <position position="844"/>
    </location>
    <ligand>
        <name>Mn(2+)</name>
        <dbReference type="ChEBI" id="CHEBI:29035"/>
        <label>4</label>
    </ligand>
</feature>
<feature type="binding site" evidence="1">
    <location>
        <position position="846"/>
    </location>
    <ligand>
        <name>Mg(2+)</name>
        <dbReference type="ChEBI" id="CHEBI:18420"/>
        <label>4</label>
    </ligand>
</feature>
<feature type="binding site" evidence="1">
    <location>
        <position position="846"/>
    </location>
    <ligand>
        <name>Mn(2+)</name>
        <dbReference type="ChEBI" id="CHEBI:29035"/>
        <label>4</label>
    </ligand>
</feature>
<gene>
    <name evidence="1" type="primary">carB</name>
    <name type="ordered locus">SGR_6051</name>
</gene>